<feature type="chain" id="PRO_0000135483" description="Queuine tRNA-ribosyltransferase">
    <location>
        <begin position="1"/>
        <end position="371"/>
    </location>
</feature>
<feature type="region of interest" description="RNA binding" evidence="1">
    <location>
        <begin position="246"/>
        <end position="252"/>
    </location>
</feature>
<feature type="region of interest" description="RNA binding; important for wobble base 34 recognition" evidence="1">
    <location>
        <begin position="270"/>
        <end position="274"/>
    </location>
</feature>
<feature type="active site" description="Nucleophile">
    <location>
        <position position="90"/>
    </location>
</feature>
<feature type="active site" description="Proton acceptor" evidence="1">
    <location>
        <position position="90"/>
    </location>
</feature>
<feature type="active site" description="Nucleophile" evidence="1">
    <location>
        <position position="265"/>
    </location>
</feature>
<feature type="binding site" evidence="1">
    <location>
        <begin position="90"/>
        <end position="94"/>
    </location>
    <ligand>
        <name>substrate</name>
    </ligand>
</feature>
<feature type="binding site">
    <location>
        <position position="91"/>
    </location>
    <ligand>
        <name>substrate</name>
    </ligand>
</feature>
<feature type="binding site" evidence="1">
    <location>
        <position position="144"/>
    </location>
    <ligand>
        <name>substrate</name>
    </ligand>
</feature>
<feature type="binding site" evidence="1">
    <location>
        <position position="189"/>
    </location>
    <ligand>
        <name>substrate</name>
    </ligand>
</feature>
<feature type="binding site" evidence="1">
    <location>
        <position position="215"/>
    </location>
    <ligand>
        <name>substrate</name>
    </ligand>
</feature>
<feature type="binding site" evidence="1">
    <location>
        <position position="303"/>
    </location>
    <ligand>
        <name>Zn(2+)</name>
        <dbReference type="ChEBI" id="CHEBI:29105"/>
    </ligand>
</feature>
<feature type="binding site" evidence="1">
    <location>
        <position position="305"/>
    </location>
    <ligand>
        <name>Zn(2+)</name>
        <dbReference type="ChEBI" id="CHEBI:29105"/>
    </ligand>
</feature>
<feature type="binding site" evidence="1">
    <location>
        <position position="308"/>
    </location>
    <ligand>
        <name>Zn(2+)</name>
        <dbReference type="ChEBI" id="CHEBI:29105"/>
    </ligand>
</feature>
<feature type="binding site" evidence="1">
    <location>
        <position position="334"/>
    </location>
    <ligand>
        <name>Zn(2+)</name>
        <dbReference type="ChEBI" id="CHEBI:29105"/>
    </ligand>
</feature>
<feature type="sequence variant" description="In strain: P1.">
    <original>NN</original>
    <variation>KH</variation>
    <location>
        <begin position="10"/>
        <end position="11"/>
    </location>
</feature>
<feature type="sequence variant" description="In strain: P1.">
    <original>N</original>
    <variation>D</variation>
    <location>
        <position position="18"/>
    </location>
</feature>
<feature type="sequence variant" description="In strain: P1.">
    <original>A</original>
    <variation>V</variation>
    <location>
        <position position="46"/>
    </location>
</feature>
<feature type="sequence variant" description="In strain: P1.">
    <original>E</original>
    <variation>G</variation>
    <location>
        <position position="48"/>
    </location>
</feature>
<feature type="sequence variant" description="In strain: P1.">
    <original>EE</original>
    <variation>GQ</variation>
    <location>
        <begin position="72"/>
        <end position="73"/>
    </location>
</feature>
<feature type="sequence variant" description="In strain: P1.">
    <original>G</original>
    <variation>V</variation>
    <location>
        <position position="76"/>
    </location>
</feature>
<feature type="sequence variant" description="In strain: P1.">
    <original>R</original>
    <variation>H</variation>
    <location>
        <position position="79"/>
    </location>
</feature>
<feature type="sequence variant" description="In strain: P1.">
    <original>Y</original>
    <variation>Q</variation>
    <location>
        <position position="84"/>
    </location>
</feature>
<feature type="sequence variant" description="In strain: P1.">
    <original>D</original>
    <variation>G</variation>
    <location>
        <position position="108"/>
    </location>
</feature>
<feature type="sequence variant" description="In strain: P1.">
    <original>SK</original>
    <variation>NN</variation>
    <location>
        <begin position="119"/>
        <end position="120"/>
    </location>
</feature>
<feature type="sequence variant" description="In strain: P1.">
    <original>M</original>
    <variation>L</variation>
    <location>
        <position position="169"/>
    </location>
</feature>
<feature type="sequence variant" description="In strain: P1.">
    <original>K</original>
    <variation>N</variation>
    <location>
        <position position="177"/>
    </location>
</feature>
<feature type="sequence variant" description="In strain: P1.">
    <original>S</original>
    <variation>N</variation>
    <location>
        <position position="181"/>
    </location>
</feature>
<feature type="sequence variant" description="In strain: P1.">
    <original>E</original>
    <variation>K</variation>
    <location>
        <position position="206"/>
    </location>
</feature>
<feature type="sequence variant" description="In strain: P1.">
    <original>A</original>
    <variation>T</variation>
    <location>
        <position position="233"/>
    </location>
</feature>
<feature type="sequence variant" description="In strain: P1.">
    <original>S</original>
    <variation>G</variation>
    <location>
        <position position="258"/>
    </location>
</feature>
<feature type="sequence variant" description="In strain: P1.">
    <original>A</original>
    <variation>T</variation>
    <location>
        <position position="304"/>
    </location>
</feature>
<sequence>MDFQLQATDNNARAGLLNLAHSQVATPVFMPVGTQGCIKSLDATDAQEILGAKLILANTYHMYLRPGEKVVEELGGLHRFAQFYGSFLTDSGGFQAFSLSDNVKLQEDGIVFKSHIDGSKHLFTPAKVLDIQYSLNSDIMMVLDDLVGLPAPLKRLEESIKRSAKWANMSLEYHKEKNRPSNNLFAIIQGGTHLKMRSLSVGLTHEGFDGYAIGGLAVGESADEMLETIAHTAPLLPKDKPRYLMGVGTPENILDAISLGVDMFDCVMPTRNARNATLFTHSGKISIKNAPYKLDNTPIEENCACYACKRYSKAYLHHLFRAKELTYARLASLHNLHFYLELVKNARNAILEKRFLSFKKEFLEKYNSRSH</sequence>
<accession>O08314</accession>
<dbReference type="EC" id="2.4.2.29" evidence="1"/>
<dbReference type="EMBL" id="AE000511">
    <property type="protein sequence ID" value="AAD07350.1"/>
    <property type="molecule type" value="Genomic_DNA"/>
</dbReference>
<dbReference type="EMBL" id="Y12061">
    <property type="protein sequence ID" value="CAA72784.1"/>
    <property type="molecule type" value="Genomic_DNA"/>
</dbReference>
<dbReference type="PIR" id="A64555">
    <property type="entry name" value="A64555"/>
</dbReference>
<dbReference type="RefSeq" id="NP_207079.1">
    <property type="nucleotide sequence ID" value="NC_000915.1"/>
</dbReference>
<dbReference type="RefSeq" id="WP_000347385.1">
    <property type="nucleotide sequence ID" value="NC_018939.1"/>
</dbReference>
<dbReference type="SMR" id="O08314"/>
<dbReference type="DIP" id="DIP-3104N"/>
<dbReference type="FunCoup" id="O08314">
    <property type="interactions" value="377"/>
</dbReference>
<dbReference type="IntAct" id="O08314">
    <property type="interactions" value="10"/>
</dbReference>
<dbReference type="MINT" id="O08314"/>
<dbReference type="STRING" id="85962.HP_0281"/>
<dbReference type="PaxDb" id="85962-C694_01420"/>
<dbReference type="EnsemblBacteria" id="AAD07350">
    <property type="protein sequence ID" value="AAD07350"/>
    <property type="gene ID" value="HP_0281"/>
</dbReference>
<dbReference type="KEGG" id="heo:C694_01420"/>
<dbReference type="KEGG" id="hpy:HP_0281"/>
<dbReference type="PATRIC" id="fig|85962.47.peg.301"/>
<dbReference type="eggNOG" id="COG0343">
    <property type="taxonomic scope" value="Bacteria"/>
</dbReference>
<dbReference type="InParanoid" id="O08314"/>
<dbReference type="OrthoDB" id="9805417at2"/>
<dbReference type="PhylomeDB" id="O08314"/>
<dbReference type="UniPathway" id="UPA00392"/>
<dbReference type="Proteomes" id="UP000000429">
    <property type="component" value="Chromosome"/>
</dbReference>
<dbReference type="GO" id="GO:0046872">
    <property type="term" value="F:metal ion binding"/>
    <property type="evidence" value="ECO:0007669"/>
    <property type="project" value="UniProtKB-KW"/>
</dbReference>
<dbReference type="GO" id="GO:0008479">
    <property type="term" value="F:tRNA-guanosine(34) queuine transglycosylase activity"/>
    <property type="evidence" value="ECO:0000318"/>
    <property type="project" value="GO_Central"/>
</dbReference>
<dbReference type="GO" id="GO:0008616">
    <property type="term" value="P:queuosine biosynthetic process"/>
    <property type="evidence" value="ECO:0007669"/>
    <property type="project" value="UniProtKB-UniRule"/>
</dbReference>
<dbReference type="GO" id="GO:0101030">
    <property type="term" value="P:tRNA-guanine transglycosylation"/>
    <property type="evidence" value="ECO:0000318"/>
    <property type="project" value="GO_Central"/>
</dbReference>
<dbReference type="Gene3D" id="3.20.20.105">
    <property type="entry name" value="Queuine tRNA-ribosyltransferase-like"/>
    <property type="match status" value="1"/>
</dbReference>
<dbReference type="HAMAP" id="MF_00168">
    <property type="entry name" value="Q_tRNA_Tgt"/>
    <property type="match status" value="1"/>
</dbReference>
<dbReference type="InterPro" id="IPR004803">
    <property type="entry name" value="TGT"/>
</dbReference>
<dbReference type="InterPro" id="IPR036511">
    <property type="entry name" value="TGT-like_sf"/>
</dbReference>
<dbReference type="InterPro" id="IPR002616">
    <property type="entry name" value="tRNA_ribo_trans-like"/>
</dbReference>
<dbReference type="NCBIfam" id="TIGR00430">
    <property type="entry name" value="Q_tRNA_tgt"/>
    <property type="match status" value="1"/>
</dbReference>
<dbReference type="NCBIfam" id="TIGR00449">
    <property type="entry name" value="tgt_general"/>
    <property type="match status" value="1"/>
</dbReference>
<dbReference type="PANTHER" id="PTHR43530">
    <property type="entry name" value="QUEUINE TRNA-RIBOSYLTRANSFERASE CATALYTIC SUBUNIT 1"/>
    <property type="match status" value="1"/>
</dbReference>
<dbReference type="PANTHER" id="PTHR43530:SF1">
    <property type="entry name" value="QUEUINE TRNA-RIBOSYLTRANSFERASE CATALYTIC SUBUNIT 1"/>
    <property type="match status" value="1"/>
</dbReference>
<dbReference type="Pfam" id="PF01702">
    <property type="entry name" value="TGT"/>
    <property type="match status" value="1"/>
</dbReference>
<dbReference type="SUPFAM" id="SSF51713">
    <property type="entry name" value="tRNA-guanine transglycosylase"/>
    <property type="match status" value="1"/>
</dbReference>
<protein>
    <recommendedName>
        <fullName evidence="1">Queuine tRNA-ribosyltransferase</fullName>
        <ecNumber evidence="1">2.4.2.29</ecNumber>
    </recommendedName>
    <alternativeName>
        <fullName evidence="1">Guanine insertion enzyme</fullName>
    </alternativeName>
    <alternativeName>
        <fullName evidence="1">tRNA-guanine transglycosylase</fullName>
    </alternativeName>
</protein>
<proteinExistence type="inferred from homology"/>
<evidence type="ECO:0000255" key="1">
    <source>
        <dbReference type="HAMAP-Rule" id="MF_00168"/>
    </source>
</evidence>
<gene>
    <name evidence="1" type="primary">tgt</name>
    <name type="ordered locus">HP_0281</name>
</gene>
<organism>
    <name type="scientific">Helicobacter pylori (strain ATCC 700392 / 26695)</name>
    <name type="common">Campylobacter pylori</name>
    <dbReference type="NCBI Taxonomy" id="85962"/>
    <lineage>
        <taxon>Bacteria</taxon>
        <taxon>Pseudomonadati</taxon>
        <taxon>Campylobacterota</taxon>
        <taxon>Epsilonproteobacteria</taxon>
        <taxon>Campylobacterales</taxon>
        <taxon>Helicobacteraceae</taxon>
        <taxon>Helicobacter</taxon>
    </lineage>
</organism>
<comment type="function">
    <text evidence="1">Catalyzes the base-exchange of a guanine (G) residue with the queuine precursor 7-aminomethyl-7-deazaguanine (PreQ1) at position 34 (anticodon wobble position) in tRNAs with GU(N) anticodons (tRNA-Asp, -Asn, -His and -Tyr). Catalysis occurs through a double-displacement mechanism. The nucleophile active site attacks the C1' of nucleotide 34 to detach the guanine base from the RNA, forming a covalent enzyme-RNA intermediate. The proton acceptor active site deprotonates the incoming PreQ1, allowing a nucleophilic attack on the C1' of the ribose to form the product. After dissociation, two additional enzymatic reactions on the tRNA convert PreQ1 to queuine (Q), resulting in the hypermodified nucleoside queuosine (7-(((4,5-cis-dihydroxy-2-cyclopenten-1-yl)amino)methyl)-7-deazaguanosine).</text>
</comment>
<comment type="catalytic activity">
    <reaction evidence="1">
        <text>7-aminomethyl-7-carbaguanine + guanosine(34) in tRNA = 7-aminomethyl-7-carbaguanosine(34) in tRNA + guanine</text>
        <dbReference type="Rhea" id="RHEA:24104"/>
        <dbReference type="Rhea" id="RHEA-COMP:10341"/>
        <dbReference type="Rhea" id="RHEA-COMP:10342"/>
        <dbReference type="ChEBI" id="CHEBI:16235"/>
        <dbReference type="ChEBI" id="CHEBI:58703"/>
        <dbReference type="ChEBI" id="CHEBI:74269"/>
        <dbReference type="ChEBI" id="CHEBI:82833"/>
        <dbReference type="EC" id="2.4.2.29"/>
    </reaction>
</comment>
<comment type="cofactor">
    <cofactor evidence="1">
        <name>Zn(2+)</name>
        <dbReference type="ChEBI" id="CHEBI:29105"/>
    </cofactor>
    <text evidence="1">Binds 1 zinc ion per subunit.</text>
</comment>
<comment type="pathway">
    <text evidence="1">tRNA modification; tRNA-queuosine biosynthesis.</text>
</comment>
<comment type="subunit">
    <text evidence="1">Homodimer. Within each dimer, one monomer is responsible for RNA recognition and catalysis, while the other monomer binds to the replacement base PreQ1.</text>
</comment>
<comment type="similarity">
    <text evidence="1">Belongs to the queuine tRNA-ribosyltransferase family.</text>
</comment>
<keyword id="KW-0328">Glycosyltransferase</keyword>
<keyword id="KW-0479">Metal-binding</keyword>
<keyword id="KW-0671">Queuosine biosynthesis</keyword>
<keyword id="KW-1185">Reference proteome</keyword>
<keyword id="KW-0808">Transferase</keyword>
<keyword id="KW-0819">tRNA processing</keyword>
<keyword id="KW-0862">Zinc</keyword>
<name>TGT_HELPY</name>
<reference key="1">
    <citation type="journal article" date="1997" name="Nature">
        <title>The complete genome sequence of the gastric pathogen Helicobacter pylori.</title>
        <authorList>
            <person name="Tomb J.-F."/>
            <person name="White O."/>
            <person name="Kerlavage A.R."/>
            <person name="Clayton R.A."/>
            <person name="Sutton G.G."/>
            <person name="Fleischmann R.D."/>
            <person name="Ketchum K.A."/>
            <person name="Klenk H.-P."/>
            <person name="Gill S.R."/>
            <person name="Dougherty B.A."/>
            <person name="Nelson K.E."/>
            <person name="Quackenbush J."/>
            <person name="Zhou L."/>
            <person name="Kirkness E.F."/>
            <person name="Peterson S.N."/>
            <person name="Loftus B.J."/>
            <person name="Richardson D.L."/>
            <person name="Dodson R.J."/>
            <person name="Khalak H.G."/>
            <person name="Glodek A."/>
            <person name="McKenney K."/>
            <person name="FitzGerald L.M."/>
            <person name="Lee N."/>
            <person name="Adams M.D."/>
            <person name="Hickey E.K."/>
            <person name="Berg D.E."/>
            <person name="Gocayne J.D."/>
            <person name="Utterback T.R."/>
            <person name="Peterson J.D."/>
            <person name="Kelley J.M."/>
            <person name="Cotton M.D."/>
            <person name="Weidman J.F."/>
            <person name="Fujii C."/>
            <person name="Bowman C."/>
            <person name="Watthey L."/>
            <person name="Wallin E."/>
            <person name="Hayes W.S."/>
            <person name="Borodovsky M."/>
            <person name="Karp P.D."/>
            <person name="Smith H.O."/>
            <person name="Fraser C.M."/>
            <person name="Venter J.C."/>
        </authorList>
    </citation>
    <scope>NUCLEOTIDE SEQUENCE [LARGE SCALE GENOMIC DNA]</scope>
    <source>
        <strain>ATCC 700392 / 26695</strain>
    </source>
</reference>
<reference key="2">
    <citation type="submission" date="1997-03" db="EMBL/GenBank/DDBJ databases">
        <authorList>
            <person name="Bereswill S."/>
            <person name="Fassbinder F."/>
            <person name="Voelzing C."/>
            <person name="Haas R."/>
            <person name="Kist M."/>
        </authorList>
    </citation>
    <scope>NUCLEOTIDE SEQUENCE [GENOMIC DNA]</scope>
    <source>
        <strain>P1</strain>
    </source>
</reference>